<sequence length="109" mass="12757">MEMDLNNRLTEDETLEQAYDIFLELAADNLDPADIILFNLQFEERGGAELFDPSEEWQEHVDFDLNPDFFAEVVIGLADTEDGEINNIFARVLLCREKNHKLCHILWRE</sequence>
<reference key="1">
    <citation type="submission" date="2007-11" db="EMBL/GenBank/DDBJ databases">
        <authorList>
            <consortium name="The Salmonella enterica serovar Arizonae Genome Sequencing Project"/>
            <person name="McClelland M."/>
            <person name="Sanderson E.K."/>
            <person name="Porwollik S."/>
            <person name="Spieth J."/>
            <person name="Clifton W.S."/>
            <person name="Fulton R."/>
            <person name="Chunyan W."/>
            <person name="Wollam A."/>
            <person name="Shah N."/>
            <person name="Pepin K."/>
            <person name="Bhonagiri V."/>
            <person name="Nash W."/>
            <person name="Johnson M."/>
            <person name="Thiruvilangam P."/>
            <person name="Wilson R."/>
        </authorList>
    </citation>
    <scope>NUCLEOTIDE SEQUENCE [LARGE SCALE GENOMIC DNA]</scope>
    <source>
        <strain>ATCC BAA-731 / CDC346-86 / RSK2980</strain>
    </source>
</reference>
<organism>
    <name type="scientific">Salmonella arizonae (strain ATCC BAA-731 / CDC346-86 / RSK2980)</name>
    <dbReference type="NCBI Taxonomy" id="41514"/>
    <lineage>
        <taxon>Bacteria</taxon>
        <taxon>Pseudomonadati</taxon>
        <taxon>Pseudomonadota</taxon>
        <taxon>Gammaproteobacteria</taxon>
        <taxon>Enterobacterales</taxon>
        <taxon>Enterobacteriaceae</taxon>
        <taxon>Salmonella</taxon>
    </lineage>
</organism>
<accession>A9MPD4</accession>
<protein>
    <recommendedName>
        <fullName evidence="1">Putative double-stranded DNA mimic protein YciU</fullName>
    </recommendedName>
</protein>
<dbReference type="EMBL" id="CP000880">
    <property type="protein sequence ID" value="ABX21115.1"/>
    <property type="molecule type" value="Genomic_DNA"/>
</dbReference>
<dbReference type="SMR" id="A9MPD4"/>
<dbReference type="STRING" id="41514.SARI_01213"/>
<dbReference type="KEGG" id="ses:SARI_01213"/>
<dbReference type="HOGENOM" id="CLU_143392_0_0_6"/>
<dbReference type="Proteomes" id="UP000002084">
    <property type="component" value="Chromosome"/>
</dbReference>
<dbReference type="Gene3D" id="3.10.450.140">
    <property type="entry name" value="dsDNA mimic, putative"/>
    <property type="match status" value="1"/>
</dbReference>
<dbReference type="HAMAP" id="MF_00680">
    <property type="entry name" value="Put_dsDNA_mimic"/>
    <property type="match status" value="1"/>
</dbReference>
<dbReference type="InterPro" id="IPR007376">
    <property type="entry name" value="dsDNA_mimic_put"/>
</dbReference>
<dbReference type="InterPro" id="IPR036763">
    <property type="entry name" value="Put_dsDNA_mimic_sf"/>
</dbReference>
<dbReference type="NCBIfam" id="NF003469">
    <property type="entry name" value="PRK05094.1"/>
    <property type="match status" value="1"/>
</dbReference>
<dbReference type="Pfam" id="PF04269">
    <property type="entry name" value="DUF440"/>
    <property type="match status" value="1"/>
</dbReference>
<dbReference type="PIRSF" id="PIRSF004916">
    <property type="entry name" value="UCP004916"/>
    <property type="match status" value="1"/>
</dbReference>
<dbReference type="SUPFAM" id="SSF102816">
    <property type="entry name" value="Putative dsDNA mimic"/>
    <property type="match status" value="1"/>
</dbReference>
<proteinExistence type="inferred from homology"/>
<name>YCIU_SALAR</name>
<gene>
    <name evidence="1" type="primary">yciU</name>
    <name type="ordered locus">SARI_01213</name>
</gene>
<comment type="function">
    <text evidence="1">May act as a double-stranded DNA (dsDNA) mimic. Probably regulates the activity of a dsDNA-binding protein.</text>
</comment>
<comment type="similarity">
    <text evidence="1">Belongs to the putative dsDNA mimic protein family.</text>
</comment>
<evidence type="ECO:0000255" key="1">
    <source>
        <dbReference type="HAMAP-Rule" id="MF_00680"/>
    </source>
</evidence>
<keyword id="KW-1185">Reference proteome</keyword>
<feature type="chain" id="PRO_1000082992" description="Putative double-stranded DNA mimic protein YciU">
    <location>
        <begin position="1"/>
        <end position="109"/>
    </location>
</feature>